<reference key="1">
    <citation type="journal article" date="2005" name="Proc. Natl. Acad. Sci. U.S.A.">
        <title>Complete genome sequencing of Anaplasma marginale reveals that the surface is skewed to two superfamilies of outer membrane proteins.</title>
        <authorList>
            <person name="Brayton K.A."/>
            <person name="Kappmeyer L.S."/>
            <person name="Herndon D.R."/>
            <person name="Dark M.J."/>
            <person name="Tibbals D.L."/>
            <person name="Palmer G.H."/>
            <person name="McGuire T.C."/>
            <person name="Knowles D.P. Jr."/>
        </authorList>
    </citation>
    <scope>NUCLEOTIDE SEQUENCE [LARGE SCALE GENOMIC DNA]</scope>
    <source>
        <strain>St. Maries</strain>
    </source>
</reference>
<accession>Q5PB43</accession>
<feature type="chain" id="PRO_0000243254" description="Dephospho-CoA kinase">
    <location>
        <begin position="1"/>
        <end position="223"/>
    </location>
</feature>
<feature type="domain" description="DPCK" evidence="1">
    <location>
        <begin position="3"/>
        <end position="204"/>
    </location>
</feature>
<feature type="binding site" evidence="1">
    <location>
        <begin position="11"/>
        <end position="16"/>
    </location>
    <ligand>
        <name>ATP</name>
        <dbReference type="ChEBI" id="CHEBI:30616"/>
    </ligand>
</feature>
<dbReference type="EC" id="2.7.1.24" evidence="1"/>
<dbReference type="EMBL" id="CP000030">
    <property type="protein sequence ID" value="AAV86487.1"/>
    <property type="status" value="ALT_INIT"/>
    <property type="molecule type" value="Genomic_DNA"/>
</dbReference>
<dbReference type="SMR" id="Q5PB43"/>
<dbReference type="KEGG" id="ama:AM438"/>
<dbReference type="HOGENOM" id="CLU_057180_3_0_5"/>
<dbReference type="UniPathway" id="UPA00241">
    <property type="reaction ID" value="UER00356"/>
</dbReference>
<dbReference type="GO" id="GO:0005737">
    <property type="term" value="C:cytoplasm"/>
    <property type="evidence" value="ECO:0007669"/>
    <property type="project" value="UniProtKB-SubCell"/>
</dbReference>
<dbReference type="GO" id="GO:0005524">
    <property type="term" value="F:ATP binding"/>
    <property type="evidence" value="ECO:0007669"/>
    <property type="project" value="UniProtKB-UniRule"/>
</dbReference>
<dbReference type="GO" id="GO:0004140">
    <property type="term" value="F:dephospho-CoA kinase activity"/>
    <property type="evidence" value="ECO:0007669"/>
    <property type="project" value="UniProtKB-UniRule"/>
</dbReference>
<dbReference type="GO" id="GO:0015937">
    <property type="term" value="P:coenzyme A biosynthetic process"/>
    <property type="evidence" value="ECO:0007669"/>
    <property type="project" value="UniProtKB-UniRule"/>
</dbReference>
<dbReference type="CDD" id="cd02022">
    <property type="entry name" value="DPCK"/>
    <property type="match status" value="1"/>
</dbReference>
<dbReference type="Gene3D" id="3.40.50.300">
    <property type="entry name" value="P-loop containing nucleotide triphosphate hydrolases"/>
    <property type="match status" value="1"/>
</dbReference>
<dbReference type="HAMAP" id="MF_00376">
    <property type="entry name" value="Dephospho_CoA_kinase"/>
    <property type="match status" value="1"/>
</dbReference>
<dbReference type="InterPro" id="IPR001977">
    <property type="entry name" value="Depp_CoAkinase"/>
</dbReference>
<dbReference type="InterPro" id="IPR027417">
    <property type="entry name" value="P-loop_NTPase"/>
</dbReference>
<dbReference type="NCBIfam" id="TIGR00152">
    <property type="entry name" value="dephospho-CoA kinase"/>
    <property type="match status" value="1"/>
</dbReference>
<dbReference type="PANTHER" id="PTHR10695:SF46">
    <property type="entry name" value="BIFUNCTIONAL COENZYME A SYNTHASE-RELATED"/>
    <property type="match status" value="1"/>
</dbReference>
<dbReference type="PANTHER" id="PTHR10695">
    <property type="entry name" value="DEPHOSPHO-COA KINASE-RELATED"/>
    <property type="match status" value="1"/>
</dbReference>
<dbReference type="Pfam" id="PF01121">
    <property type="entry name" value="CoaE"/>
    <property type="match status" value="1"/>
</dbReference>
<dbReference type="SUPFAM" id="SSF52540">
    <property type="entry name" value="P-loop containing nucleoside triphosphate hydrolases"/>
    <property type="match status" value="1"/>
</dbReference>
<dbReference type="PROSITE" id="PS51219">
    <property type="entry name" value="DPCK"/>
    <property type="match status" value="1"/>
</dbReference>
<keyword id="KW-0067">ATP-binding</keyword>
<keyword id="KW-0173">Coenzyme A biosynthesis</keyword>
<keyword id="KW-0963">Cytoplasm</keyword>
<keyword id="KW-0418">Kinase</keyword>
<keyword id="KW-0547">Nucleotide-binding</keyword>
<keyword id="KW-0808">Transferase</keyword>
<sequence length="223" mass="25006">MIVFGLSGGAGSGKSTVAAMFAQSCNAAVFDADKIVHSMYSGDAIITGLVAKYFPDCICNGVVSRERLSKHFFSYGPLWLEFQSILHSIVLRQQRKFILEQGKIGRDYAVLDVPLLLEAGFWRCCDFVINVDVHKSLQWHRLRQRGLSEREIEFLLSLQMPRGSRRNFADFYVNCGGRKGEVLKSVLQIVGSLNAGRHRFRVARKKLAMRSALDRRASTMASA</sequence>
<name>COAE_ANAMM</name>
<comment type="function">
    <text evidence="1">Catalyzes the phosphorylation of the 3'-hydroxyl group of dephosphocoenzyme A to form coenzyme A.</text>
</comment>
<comment type="catalytic activity">
    <reaction evidence="1">
        <text>3'-dephospho-CoA + ATP = ADP + CoA + H(+)</text>
        <dbReference type="Rhea" id="RHEA:18245"/>
        <dbReference type="ChEBI" id="CHEBI:15378"/>
        <dbReference type="ChEBI" id="CHEBI:30616"/>
        <dbReference type="ChEBI" id="CHEBI:57287"/>
        <dbReference type="ChEBI" id="CHEBI:57328"/>
        <dbReference type="ChEBI" id="CHEBI:456216"/>
        <dbReference type="EC" id="2.7.1.24"/>
    </reaction>
</comment>
<comment type="pathway">
    <text evidence="1">Cofactor biosynthesis; coenzyme A biosynthesis; CoA from (R)-pantothenate: step 5/5.</text>
</comment>
<comment type="subcellular location">
    <subcellularLocation>
        <location evidence="1">Cytoplasm</location>
    </subcellularLocation>
</comment>
<comment type="similarity">
    <text evidence="1">Belongs to the CoaE family.</text>
</comment>
<comment type="sequence caution" evidence="2">
    <conflict type="erroneous initiation">
        <sequence resource="EMBL-CDS" id="AAV86487"/>
    </conflict>
</comment>
<organism>
    <name type="scientific">Anaplasma marginale (strain St. Maries)</name>
    <dbReference type="NCBI Taxonomy" id="234826"/>
    <lineage>
        <taxon>Bacteria</taxon>
        <taxon>Pseudomonadati</taxon>
        <taxon>Pseudomonadota</taxon>
        <taxon>Alphaproteobacteria</taxon>
        <taxon>Rickettsiales</taxon>
        <taxon>Anaplasmataceae</taxon>
        <taxon>Anaplasma</taxon>
    </lineage>
</organism>
<evidence type="ECO:0000255" key="1">
    <source>
        <dbReference type="HAMAP-Rule" id="MF_00376"/>
    </source>
</evidence>
<evidence type="ECO:0000305" key="2"/>
<gene>
    <name evidence="1" type="primary">coaE</name>
    <name type="ordered locus">AM438</name>
</gene>
<protein>
    <recommendedName>
        <fullName evidence="1">Dephospho-CoA kinase</fullName>
        <ecNumber evidence="1">2.7.1.24</ecNumber>
    </recommendedName>
    <alternativeName>
        <fullName evidence="1">Dephosphocoenzyme A kinase</fullName>
    </alternativeName>
</protein>
<proteinExistence type="inferred from homology"/>